<protein>
    <recommendedName>
        <fullName>Protocadherin gamma-A8</fullName>
        <shortName>PCDH-gamma-A8</shortName>
    </recommendedName>
</protein>
<accession>Q5DRB2</accession>
<dbReference type="RefSeq" id="NP_001026791.2">
    <property type="nucleotide sequence ID" value="NM_001031620.3"/>
</dbReference>
<dbReference type="SMR" id="Q5DRB2"/>
<dbReference type="FunCoup" id="Q5DRB2">
    <property type="interactions" value="50"/>
</dbReference>
<dbReference type="GlyCosmos" id="Q5DRB2">
    <property type="glycosylation" value="5 sites, No reported glycans"/>
</dbReference>
<dbReference type="Ensembl" id="ENSPTRT00000061828.4">
    <property type="protein sequence ID" value="ENSPTRP00000054371.4"/>
    <property type="gene ID" value="ENSPTRG00000017346.7"/>
</dbReference>
<dbReference type="GeneID" id="471673"/>
<dbReference type="KEGG" id="ptr:471673"/>
<dbReference type="CTD" id="9708"/>
<dbReference type="GeneTree" id="ENSGT00940000162232"/>
<dbReference type="InParanoid" id="Q5DRB2"/>
<dbReference type="OrthoDB" id="12185at9604"/>
<dbReference type="Proteomes" id="UP000002277">
    <property type="component" value="Chromosome 5"/>
</dbReference>
<dbReference type="Bgee" id="ENSPTRG00000017346">
    <property type="expression patterns" value="Expressed in dorsolateral prefrontal cortex and 21 other cell types or tissues"/>
</dbReference>
<dbReference type="GO" id="GO:0005886">
    <property type="term" value="C:plasma membrane"/>
    <property type="evidence" value="ECO:0007669"/>
    <property type="project" value="UniProtKB-SubCell"/>
</dbReference>
<dbReference type="GO" id="GO:0005509">
    <property type="term" value="F:calcium ion binding"/>
    <property type="evidence" value="ECO:0007669"/>
    <property type="project" value="InterPro"/>
</dbReference>
<dbReference type="GO" id="GO:0007156">
    <property type="term" value="P:homophilic cell adhesion via plasma membrane adhesion molecules"/>
    <property type="evidence" value="ECO:0007669"/>
    <property type="project" value="InterPro"/>
</dbReference>
<dbReference type="GO" id="GO:0007399">
    <property type="term" value="P:nervous system development"/>
    <property type="evidence" value="ECO:0007669"/>
    <property type="project" value="UniProtKB-ARBA"/>
</dbReference>
<dbReference type="CDD" id="cd11304">
    <property type="entry name" value="Cadherin_repeat"/>
    <property type="match status" value="6"/>
</dbReference>
<dbReference type="FunFam" id="2.60.40.60:FF:000004">
    <property type="entry name" value="Protocadherin 1 gamma 2"/>
    <property type="match status" value="1"/>
</dbReference>
<dbReference type="FunFam" id="2.60.40.60:FF:000001">
    <property type="entry name" value="Protocadherin alpha 2"/>
    <property type="match status" value="1"/>
</dbReference>
<dbReference type="FunFam" id="2.60.40.60:FF:000002">
    <property type="entry name" value="Protocadherin alpha 2"/>
    <property type="match status" value="1"/>
</dbReference>
<dbReference type="FunFam" id="2.60.40.60:FF:000006">
    <property type="entry name" value="Protocadherin alpha 2"/>
    <property type="match status" value="1"/>
</dbReference>
<dbReference type="FunFam" id="2.60.40.60:FF:000129">
    <property type="entry name" value="protocadherin alpha-C2 isoform X1"/>
    <property type="match status" value="1"/>
</dbReference>
<dbReference type="FunFam" id="2.60.40.60:FF:000018">
    <property type="entry name" value="Protocadherin gamma c3"/>
    <property type="match status" value="1"/>
</dbReference>
<dbReference type="Gene3D" id="2.60.40.60">
    <property type="entry name" value="Cadherins"/>
    <property type="match status" value="6"/>
</dbReference>
<dbReference type="InterPro" id="IPR002126">
    <property type="entry name" value="Cadherin-like_dom"/>
</dbReference>
<dbReference type="InterPro" id="IPR015919">
    <property type="entry name" value="Cadherin-like_sf"/>
</dbReference>
<dbReference type="InterPro" id="IPR032455">
    <property type="entry name" value="Cadherin_C"/>
</dbReference>
<dbReference type="InterPro" id="IPR031904">
    <property type="entry name" value="Cadherin_CBD"/>
</dbReference>
<dbReference type="InterPro" id="IPR020894">
    <property type="entry name" value="Cadherin_CS"/>
</dbReference>
<dbReference type="InterPro" id="IPR013164">
    <property type="entry name" value="Cadherin_N"/>
</dbReference>
<dbReference type="InterPro" id="IPR050174">
    <property type="entry name" value="Protocadherin/Cadherin-CA"/>
</dbReference>
<dbReference type="PANTHER" id="PTHR24028">
    <property type="entry name" value="CADHERIN-87A"/>
    <property type="match status" value="1"/>
</dbReference>
<dbReference type="PANTHER" id="PTHR24028:SF72">
    <property type="entry name" value="PROTOCADHERIN GAMMA-A8"/>
    <property type="match status" value="1"/>
</dbReference>
<dbReference type="Pfam" id="PF00028">
    <property type="entry name" value="Cadherin"/>
    <property type="match status" value="5"/>
</dbReference>
<dbReference type="Pfam" id="PF08266">
    <property type="entry name" value="Cadherin_2"/>
    <property type="match status" value="1"/>
</dbReference>
<dbReference type="Pfam" id="PF16492">
    <property type="entry name" value="Cadherin_C_2"/>
    <property type="match status" value="1"/>
</dbReference>
<dbReference type="Pfam" id="PF15974">
    <property type="entry name" value="Cadherin_tail"/>
    <property type="match status" value="1"/>
</dbReference>
<dbReference type="PRINTS" id="PR00205">
    <property type="entry name" value="CADHERIN"/>
</dbReference>
<dbReference type="SMART" id="SM00112">
    <property type="entry name" value="CA"/>
    <property type="match status" value="6"/>
</dbReference>
<dbReference type="SUPFAM" id="SSF49313">
    <property type="entry name" value="Cadherin-like"/>
    <property type="match status" value="6"/>
</dbReference>
<dbReference type="PROSITE" id="PS00232">
    <property type="entry name" value="CADHERIN_1"/>
    <property type="match status" value="5"/>
</dbReference>
<dbReference type="PROSITE" id="PS50268">
    <property type="entry name" value="CADHERIN_2"/>
    <property type="match status" value="6"/>
</dbReference>
<evidence type="ECO:0000250" key="1"/>
<evidence type="ECO:0000255" key="2"/>
<evidence type="ECO:0000255" key="3">
    <source>
        <dbReference type="PROSITE-ProRule" id="PRU00043"/>
    </source>
</evidence>
<evidence type="ECO:0000256" key="4">
    <source>
        <dbReference type="SAM" id="MobiDB-lite"/>
    </source>
</evidence>
<name>PCDG8_PANTR</name>
<comment type="function">
    <text>Potential calcium-dependent cell-adhesion protein. May be involved in the establishment and maintenance of specific neuronal connections in the brain.</text>
</comment>
<comment type="subcellular location">
    <subcellularLocation>
        <location evidence="1">Cell membrane</location>
        <topology evidence="1">Single-pass type I membrane protein</topology>
    </subcellularLocation>
</comment>
<keyword id="KW-0106">Calcium</keyword>
<keyword id="KW-0130">Cell adhesion</keyword>
<keyword id="KW-1003">Cell membrane</keyword>
<keyword id="KW-0325">Glycoprotein</keyword>
<keyword id="KW-0472">Membrane</keyword>
<keyword id="KW-1185">Reference proteome</keyword>
<keyword id="KW-0677">Repeat</keyword>
<keyword id="KW-0732">Signal</keyword>
<keyword id="KW-0812">Transmembrane</keyword>
<keyword id="KW-1133">Transmembrane helix</keyword>
<proteinExistence type="inferred from homology"/>
<feature type="signal peptide" evidence="2">
    <location>
        <begin position="1"/>
        <end position="29"/>
    </location>
</feature>
<feature type="chain" id="PRO_0000003963" description="Protocadherin gamma-A8">
    <location>
        <begin position="30"/>
        <end position="932"/>
    </location>
</feature>
<feature type="topological domain" description="Extracellular" evidence="2">
    <location>
        <begin position="30"/>
        <end position="692"/>
    </location>
</feature>
<feature type="transmembrane region" description="Helical" evidence="2">
    <location>
        <begin position="693"/>
        <end position="713"/>
    </location>
</feature>
<feature type="topological domain" description="Cytoplasmic" evidence="2">
    <location>
        <begin position="714"/>
        <end position="932"/>
    </location>
</feature>
<feature type="domain" description="Cadherin 1" evidence="3">
    <location>
        <begin position="30"/>
        <end position="133"/>
    </location>
</feature>
<feature type="domain" description="Cadherin 2" evidence="3">
    <location>
        <begin position="134"/>
        <end position="242"/>
    </location>
</feature>
<feature type="domain" description="Cadherin 3" evidence="3">
    <location>
        <begin position="243"/>
        <end position="347"/>
    </location>
</feature>
<feature type="domain" description="Cadherin 4" evidence="3">
    <location>
        <begin position="348"/>
        <end position="452"/>
    </location>
</feature>
<feature type="domain" description="Cadherin 5" evidence="3">
    <location>
        <begin position="453"/>
        <end position="562"/>
    </location>
</feature>
<feature type="domain" description="Cadherin 6" evidence="3">
    <location>
        <begin position="570"/>
        <end position="682"/>
    </location>
</feature>
<feature type="region of interest" description="Disordered" evidence="4">
    <location>
        <begin position="804"/>
        <end position="841"/>
    </location>
</feature>
<feature type="region of interest" description="Disordered" evidence="4">
    <location>
        <begin position="902"/>
        <end position="932"/>
    </location>
</feature>
<feature type="compositionally biased region" description="Polar residues" evidence="4">
    <location>
        <begin position="810"/>
        <end position="841"/>
    </location>
</feature>
<feature type="compositionally biased region" description="Basic residues" evidence="4">
    <location>
        <begin position="922"/>
        <end position="932"/>
    </location>
</feature>
<feature type="glycosylation site" description="N-linked (GlcNAc...) asparagine" evidence="2">
    <location>
        <position position="47"/>
    </location>
</feature>
<feature type="glycosylation site" description="N-linked (GlcNAc...) asparagine" evidence="2">
    <location>
        <position position="414"/>
    </location>
</feature>
<feature type="glycosylation site" description="N-linked (GlcNAc...) asparagine" evidence="2">
    <location>
        <position position="419"/>
    </location>
</feature>
<feature type="glycosylation site" description="N-linked (GlcNAc...) asparagine" evidence="2">
    <location>
        <position position="545"/>
    </location>
</feature>
<feature type="glycosylation site" description="N-linked (GlcNAc...) asparagine" evidence="2">
    <location>
        <position position="685"/>
    </location>
</feature>
<reference key="1">
    <citation type="journal article" date="2005" name="Nature">
        <title>Initial sequence of the chimpanzee genome and comparison with the human genome.</title>
        <authorList>
            <consortium name="Chimpanzee sequencing and analysis consortium"/>
        </authorList>
    </citation>
    <scope>NUCLEOTIDE SEQUENCE [LARGE SCALE GENOMIC DNA]</scope>
</reference>
<reference key="2">
    <citation type="journal article" date="2005" name="Genetics">
        <title>Comparative genomics and diversifying selection of the clustered vertebrate protocadherin genes.</title>
        <authorList>
            <person name="Wu Q."/>
        </authorList>
    </citation>
    <scope>IDENTIFICATION</scope>
</reference>
<gene>
    <name type="primary">PCDHGA8</name>
</gene>
<sequence>MAAPQSRPRRGELILLCALLGTLWEIGRGQIRYSVPEETDKGSFVGNISKDLGLDPRELAKHGVRIVSRGRTQLFALNPRSGSLVTAGRIDREELCAQSPRCLININILVEDKGKLFGIEIEIVDINDNNPKFQVEDLEVKINEIAVPGARYPLPEAVDPDVGVNSLQSYQLSPNHHFSLDVQTGDNGAINPELVLERALDREEEAAHHLVLTASDGGEPRRSSTVRIHVTVLDTNDNAPVFPHPIYRVKVLENMPPGTRLLTVTASDPDEGINGKVAYKFRKINEKQTPLFQLNENTGEISIAKSLDYEECSFYEMEIQAEDVGALLGRTKLLISVEDVNDNRPEVIITSLFSPVLENSLPGTVIAFLSVHDQDSGKNGQVVCHTRDNLPFKLEKSIDNYYRLVTRKYLDRENVSIYNITVMASDLGTPPLSTETQIALHVADINDNPPTFPHASYSAYILENNLRGASIFSLTAHDPDSQENAQVTYSVTEDTLQGAPLSSYISINSDTGVLYALQSFDYEQIRDLQLLVTASDSGDPPLSSNVSLSLFVLDQNDNAPEILYPTLPTDGSTGLELAPRSAEPGYLVTKVVAVDRDSGQNAWLSYRLLKASEPGLFSVGLHTGEVRTARALLDRDALKQSLVVAVQDHGQPPLSATVTLTVAVADSIPEVLTELGSLKPSVDPNDSSLTLYLVVAVAAISCVFLAFVAVLLGLRLRRWHKSHLLQDSSGRLVGVPASHFVGVEEVQAFLQTYSQEVSLTADSRKSHLIFPQPNYADTLISQESCEKNDSLLTSVDFHEYKNEADHGQQAPPNTDWRFSQAQRPGTSGSQNGDDTGTWPNNQFDTEMLQAMILASASEAADGSSTLGGGAGTMGLSARYGPQFTLQHVPDYRQNVYIPGSNATLTNAAGKRDGKAPAGGNGNKKKSGKKEKK</sequence>
<organism>
    <name type="scientific">Pan troglodytes</name>
    <name type="common">Chimpanzee</name>
    <dbReference type="NCBI Taxonomy" id="9598"/>
    <lineage>
        <taxon>Eukaryota</taxon>
        <taxon>Metazoa</taxon>
        <taxon>Chordata</taxon>
        <taxon>Craniata</taxon>
        <taxon>Vertebrata</taxon>
        <taxon>Euteleostomi</taxon>
        <taxon>Mammalia</taxon>
        <taxon>Eutheria</taxon>
        <taxon>Euarchontoglires</taxon>
        <taxon>Primates</taxon>
        <taxon>Haplorrhini</taxon>
        <taxon>Catarrhini</taxon>
        <taxon>Hominidae</taxon>
        <taxon>Pan</taxon>
    </lineage>
</organism>